<evidence type="ECO:0000250" key="1">
    <source>
        <dbReference type="UniProtKB" id="Q8WZM3"/>
    </source>
</evidence>
<evidence type="ECO:0000250" key="2">
    <source>
        <dbReference type="UniProtKB" id="Q9BV79"/>
    </source>
</evidence>
<evidence type="ECO:0000269" key="3">
    <source>
    </source>
</evidence>
<evidence type="ECO:0000269" key="4">
    <source>
    </source>
</evidence>
<evidence type="ECO:0000305" key="5"/>
<evidence type="ECO:0000305" key="6">
    <source>
    </source>
</evidence>
<reference key="1">
    <citation type="journal article" date="2000" name="Nature">
        <title>Sequence and analysis of chromosome 3 of the plant Arabidopsis thaliana.</title>
        <authorList>
            <person name="Salanoubat M."/>
            <person name="Lemcke K."/>
            <person name="Rieger M."/>
            <person name="Ansorge W."/>
            <person name="Unseld M."/>
            <person name="Fartmann B."/>
            <person name="Valle G."/>
            <person name="Bloecker H."/>
            <person name="Perez-Alonso M."/>
            <person name="Obermaier B."/>
            <person name="Delseny M."/>
            <person name="Boutry M."/>
            <person name="Grivell L.A."/>
            <person name="Mache R."/>
            <person name="Puigdomenech P."/>
            <person name="De Simone V."/>
            <person name="Choisne N."/>
            <person name="Artiguenave F."/>
            <person name="Robert C."/>
            <person name="Brottier P."/>
            <person name="Wincker P."/>
            <person name="Cattolico L."/>
            <person name="Weissenbach J."/>
            <person name="Saurin W."/>
            <person name="Quetier F."/>
            <person name="Schaefer M."/>
            <person name="Mueller-Auer S."/>
            <person name="Gabel C."/>
            <person name="Fuchs M."/>
            <person name="Benes V."/>
            <person name="Wurmbach E."/>
            <person name="Drzonek H."/>
            <person name="Erfle H."/>
            <person name="Jordan N."/>
            <person name="Bangert S."/>
            <person name="Wiedelmann R."/>
            <person name="Kranz H."/>
            <person name="Voss H."/>
            <person name="Holland R."/>
            <person name="Brandt P."/>
            <person name="Nyakatura G."/>
            <person name="Vezzi A."/>
            <person name="D'Angelo M."/>
            <person name="Pallavicini A."/>
            <person name="Toppo S."/>
            <person name="Simionati B."/>
            <person name="Conrad A."/>
            <person name="Hornischer K."/>
            <person name="Kauer G."/>
            <person name="Loehnert T.-H."/>
            <person name="Nordsiek G."/>
            <person name="Reichelt J."/>
            <person name="Scharfe M."/>
            <person name="Schoen O."/>
            <person name="Bargues M."/>
            <person name="Terol J."/>
            <person name="Climent J."/>
            <person name="Navarro P."/>
            <person name="Collado C."/>
            <person name="Perez-Perez A."/>
            <person name="Ottenwaelder B."/>
            <person name="Duchemin D."/>
            <person name="Cooke R."/>
            <person name="Laudie M."/>
            <person name="Berger-Llauro C."/>
            <person name="Purnelle B."/>
            <person name="Masuy D."/>
            <person name="de Haan M."/>
            <person name="Maarse A.C."/>
            <person name="Alcaraz J.-P."/>
            <person name="Cottet A."/>
            <person name="Casacuberta E."/>
            <person name="Monfort A."/>
            <person name="Argiriou A."/>
            <person name="Flores M."/>
            <person name="Liguori R."/>
            <person name="Vitale D."/>
            <person name="Mannhaupt G."/>
            <person name="Haase D."/>
            <person name="Schoof H."/>
            <person name="Rudd S."/>
            <person name="Zaccaria P."/>
            <person name="Mewes H.-W."/>
            <person name="Mayer K.F.X."/>
            <person name="Kaul S."/>
            <person name="Town C.D."/>
            <person name="Koo H.L."/>
            <person name="Tallon L.J."/>
            <person name="Jenkins J."/>
            <person name="Rooney T."/>
            <person name="Rizzo M."/>
            <person name="Walts A."/>
            <person name="Utterback T."/>
            <person name="Fujii C.Y."/>
            <person name="Shea T.P."/>
            <person name="Creasy T.H."/>
            <person name="Haas B."/>
            <person name="Maiti R."/>
            <person name="Wu D."/>
            <person name="Peterson J."/>
            <person name="Van Aken S."/>
            <person name="Pai G."/>
            <person name="Militscher J."/>
            <person name="Sellers P."/>
            <person name="Gill J.E."/>
            <person name="Feldblyum T.V."/>
            <person name="Preuss D."/>
            <person name="Lin X."/>
            <person name="Nierman W.C."/>
            <person name="Salzberg S.L."/>
            <person name="White O."/>
            <person name="Venter J.C."/>
            <person name="Fraser C.M."/>
            <person name="Kaneko T."/>
            <person name="Nakamura Y."/>
            <person name="Sato S."/>
            <person name="Kato T."/>
            <person name="Asamizu E."/>
            <person name="Sasamoto S."/>
            <person name="Kimura T."/>
            <person name="Idesawa K."/>
            <person name="Kawashima K."/>
            <person name="Kishida Y."/>
            <person name="Kiyokawa C."/>
            <person name="Kohara M."/>
            <person name="Matsumoto M."/>
            <person name="Matsuno A."/>
            <person name="Muraki A."/>
            <person name="Nakayama S."/>
            <person name="Nakazaki N."/>
            <person name="Shinpo S."/>
            <person name="Takeuchi C."/>
            <person name="Wada T."/>
            <person name="Watanabe A."/>
            <person name="Yamada M."/>
            <person name="Yasuda M."/>
            <person name="Tabata S."/>
        </authorList>
    </citation>
    <scope>NUCLEOTIDE SEQUENCE [LARGE SCALE GENOMIC DNA]</scope>
    <source>
        <strain>cv. Columbia</strain>
    </source>
</reference>
<reference key="2">
    <citation type="journal article" date="2017" name="Plant J.">
        <title>Araport11: a complete reannotation of the Arabidopsis thaliana reference genome.</title>
        <authorList>
            <person name="Cheng C.Y."/>
            <person name="Krishnakumar V."/>
            <person name="Chan A.P."/>
            <person name="Thibaud-Nissen F."/>
            <person name="Schobel S."/>
            <person name="Town C.D."/>
        </authorList>
    </citation>
    <scope>GENOME REANNOTATION</scope>
    <source>
        <strain>cv. Columbia</strain>
    </source>
</reference>
<reference key="3">
    <citation type="journal article" date="2003" name="Science">
        <title>Empirical analysis of transcriptional activity in the Arabidopsis genome.</title>
        <authorList>
            <person name="Yamada K."/>
            <person name="Lim J."/>
            <person name="Dale J.M."/>
            <person name="Chen H."/>
            <person name="Shinn P."/>
            <person name="Palm C.J."/>
            <person name="Southwick A.M."/>
            <person name="Wu H.C."/>
            <person name="Kim C.J."/>
            <person name="Nguyen M."/>
            <person name="Pham P.K."/>
            <person name="Cheuk R.F."/>
            <person name="Karlin-Newmann G."/>
            <person name="Liu S.X."/>
            <person name="Lam B."/>
            <person name="Sakano H."/>
            <person name="Wu T."/>
            <person name="Yu G."/>
            <person name="Miranda M."/>
            <person name="Quach H.L."/>
            <person name="Tripp M."/>
            <person name="Chang C.H."/>
            <person name="Lee J.M."/>
            <person name="Toriumi M.J."/>
            <person name="Chan M.M."/>
            <person name="Tang C.C."/>
            <person name="Onodera C.S."/>
            <person name="Deng J.M."/>
            <person name="Akiyama K."/>
            <person name="Ansari Y."/>
            <person name="Arakawa T."/>
            <person name="Banh J."/>
            <person name="Banno F."/>
            <person name="Bowser L."/>
            <person name="Brooks S.Y."/>
            <person name="Carninci P."/>
            <person name="Chao Q."/>
            <person name="Choy N."/>
            <person name="Enju A."/>
            <person name="Goldsmith A.D."/>
            <person name="Gurjal M."/>
            <person name="Hansen N.F."/>
            <person name="Hayashizaki Y."/>
            <person name="Johnson-Hopson C."/>
            <person name="Hsuan V.W."/>
            <person name="Iida K."/>
            <person name="Karnes M."/>
            <person name="Khan S."/>
            <person name="Koesema E."/>
            <person name="Ishida J."/>
            <person name="Jiang P.X."/>
            <person name="Jones T."/>
            <person name="Kawai J."/>
            <person name="Kamiya A."/>
            <person name="Meyers C."/>
            <person name="Nakajima M."/>
            <person name="Narusaka M."/>
            <person name="Seki M."/>
            <person name="Sakurai T."/>
            <person name="Satou M."/>
            <person name="Tamse R."/>
            <person name="Vaysberg M."/>
            <person name="Wallender E.K."/>
            <person name="Wong C."/>
            <person name="Yamamura Y."/>
            <person name="Yuan S."/>
            <person name="Shinozaki K."/>
            <person name="Davis R.W."/>
            <person name="Theologis A."/>
            <person name="Ecker J.R."/>
        </authorList>
    </citation>
    <scope>NUCLEOTIDE SEQUENCE [LARGE SCALE MRNA]</scope>
    <source>
        <strain>cv. Columbia</strain>
    </source>
</reference>
<reference key="4">
    <citation type="submission" date="2002-03" db="EMBL/GenBank/DDBJ databases">
        <title>Full-length cDNA from Arabidopsis thaliana.</title>
        <authorList>
            <person name="Brover V.V."/>
            <person name="Troukhan M.E."/>
            <person name="Alexandrov N.A."/>
            <person name="Lu Y.-P."/>
            <person name="Flavell R.B."/>
            <person name="Feldmann K.A."/>
        </authorList>
    </citation>
    <scope>NUCLEOTIDE SEQUENCE [LARGE SCALE MRNA]</scope>
</reference>
<reference key="5">
    <citation type="journal article" date="2004" name="Plant Cell">
        <title>Experimental analysis of the Arabidopsis mitochondrial proteome highlights signaling and regulatory components, provides assessment of targeting prediction programs, and indicates plant-specific mitochondrial proteins.</title>
        <authorList>
            <person name="Heazlewood J.L."/>
            <person name="Tonti-Filippini J.S."/>
            <person name="Gout A.M."/>
            <person name="Day D.A."/>
            <person name="Whelan J."/>
            <person name="Millar A.H."/>
        </authorList>
    </citation>
    <scope>IDENTIFICATION BY MASS SPECTROMETRY</scope>
    <scope>SUBCELLULAR LOCATION [LARGE SCALE ANALYSIS]</scope>
    <source>
        <strain>cv. Landsberg erecta</strain>
    </source>
</reference>
<reference key="6">
    <citation type="journal article" date="2015" name="J. Exp. Bot.">
        <title>Identification of cleavage sites and substrate proteins for two mitochondrial intermediate peptidases in Arabidopsis thaliana.</title>
        <authorList>
            <person name="Carrie C."/>
            <person name="Venne A.S."/>
            <person name="Zahedi R.P."/>
            <person name="Soll J."/>
        </authorList>
    </citation>
    <scope>IDENTIFICATION BY MASS SPECTROMETRY</scope>
    <scope>CLEAVAGE OF TRANSIT PEPTIDE AFTER PHE-37</scope>
</reference>
<proteinExistence type="evidence at protein level"/>
<accession>Q8LCU7</accession>
<accession>Q8W4H6</accession>
<accession>Q9M166</accession>
<comment type="function">
    <text evidence="2">Catalyzes the NADPH-dependent reduction of trans-2-enoyl thioesters in mitochondrial fatty acid synthesis (fatty acid synthesis type II). Fatty acid chain elongation in mitochondria uses acyl carrier protein (ACP) as an acyl group carrier, but the enzyme accepts both ACP and CoA thioesters as substrates in vitro.</text>
</comment>
<comment type="catalytic activity">
    <reaction evidence="2">
        <text>a 2,3-saturated acyl-[ACP] + NADP(+) = a (2E)-enoyl-[ACP] + NADPH + H(+)</text>
        <dbReference type="Rhea" id="RHEA:22564"/>
        <dbReference type="Rhea" id="RHEA-COMP:9925"/>
        <dbReference type="Rhea" id="RHEA-COMP:9926"/>
        <dbReference type="ChEBI" id="CHEBI:15378"/>
        <dbReference type="ChEBI" id="CHEBI:57783"/>
        <dbReference type="ChEBI" id="CHEBI:58349"/>
        <dbReference type="ChEBI" id="CHEBI:78784"/>
        <dbReference type="ChEBI" id="CHEBI:78785"/>
        <dbReference type="EC" id="1.3.1.104"/>
    </reaction>
</comment>
<comment type="subunit">
    <text evidence="2">Homodimer.</text>
</comment>
<comment type="subcellular location">
    <subcellularLocation>
        <location evidence="3 6">Mitochondrion</location>
    </subcellularLocation>
</comment>
<comment type="alternative products">
    <event type="alternative splicing"/>
    <isoform>
        <id>Q8LCU7-1</id>
        <name>1</name>
        <sequence type="displayed"/>
    </isoform>
    <text>A number of isoforms are produced. According to EST sequences.</text>
</comment>
<comment type="similarity">
    <text evidence="5">Belongs to the zinc-containing alcohol dehydrogenase family. Quinone oxidoreductase subfamily.</text>
</comment>
<comment type="sequence caution" evidence="5">
    <conflict type="erroneous gene model prediction">
        <sequence resource="EMBL-CDS" id="CAB75790"/>
    </conflict>
</comment>
<dbReference type="EC" id="1.3.1.104"/>
<dbReference type="EMBL" id="AL157735">
    <property type="protein sequence ID" value="CAB75790.1"/>
    <property type="status" value="ALT_SEQ"/>
    <property type="molecule type" value="Genomic_DNA"/>
</dbReference>
<dbReference type="EMBL" id="CP002686">
    <property type="protein sequence ID" value="AEE78071.1"/>
    <property type="molecule type" value="Genomic_DNA"/>
</dbReference>
<dbReference type="EMBL" id="AY062554">
    <property type="protein sequence ID" value="AAL32632.1"/>
    <property type="molecule type" value="mRNA"/>
</dbReference>
<dbReference type="EMBL" id="AY114655">
    <property type="protein sequence ID" value="AAM47974.1"/>
    <property type="molecule type" value="mRNA"/>
</dbReference>
<dbReference type="EMBL" id="AY086398">
    <property type="protein sequence ID" value="AAM64465.1"/>
    <property type="molecule type" value="mRNA"/>
</dbReference>
<dbReference type="PIR" id="T47517">
    <property type="entry name" value="T47517"/>
</dbReference>
<dbReference type="RefSeq" id="NP_566881.1">
    <molecule id="Q8LCU7-1"/>
    <property type="nucleotide sequence ID" value="NM_114446.4"/>
</dbReference>
<dbReference type="SMR" id="Q8LCU7"/>
<dbReference type="BioGRID" id="9040">
    <property type="interactions" value="2"/>
</dbReference>
<dbReference type="FunCoup" id="Q8LCU7">
    <property type="interactions" value="4107"/>
</dbReference>
<dbReference type="STRING" id="3702.Q8LCU7"/>
<dbReference type="iPTMnet" id="Q8LCU7"/>
<dbReference type="PaxDb" id="3702-AT3G45770.1"/>
<dbReference type="ProteomicsDB" id="238250">
    <molecule id="Q8LCU7-1"/>
</dbReference>
<dbReference type="EnsemblPlants" id="AT3G45770.1">
    <molecule id="Q8LCU7-1"/>
    <property type="protein sequence ID" value="AT3G45770.1"/>
    <property type="gene ID" value="AT3G45770"/>
</dbReference>
<dbReference type="GeneID" id="823720"/>
<dbReference type="Gramene" id="AT3G45770.1">
    <molecule id="Q8LCU7-1"/>
    <property type="protein sequence ID" value="AT3G45770.1"/>
    <property type="gene ID" value="AT3G45770"/>
</dbReference>
<dbReference type="KEGG" id="ath:AT3G45770"/>
<dbReference type="Araport" id="AT3G45770"/>
<dbReference type="TAIR" id="AT3G45770"/>
<dbReference type="eggNOG" id="KOG0025">
    <property type="taxonomic scope" value="Eukaryota"/>
</dbReference>
<dbReference type="InParanoid" id="Q8LCU7"/>
<dbReference type="OMA" id="YGYTQSK"/>
<dbReference type="OrthoDB" id="7482721at2759"/>
<dbReference type="PhylomeDB" id="Q8LCU7"/>
<dbReference type="BioCyc" id="ARA:AT3G45770-MONOMER"/>
<dbReference type="PRO" id="PR:Q8LCU7"/>
<dbReference type="Proteomes" id="UP000006548">
    <property type="component" value="Chromosome 3"/>
</dbReference>
<dbReference type="ExpressionAtlas" id="Q8LCU7">
    <property type="expression patterns" value="baseline and differential"/>
</dbReference>
<dbReference type="GO" id="GO:0009507">
    <property type="term" value="C:chloroplast"/>
    <property type="evidence" value="ECO:0007005"/>
    <property type="project" value="TAIR"/>
</dbReference>
<dbReference type="GO" id="GO:0005829">
    <property type="term" value="C:cytosol"/>
    <property type="evidence" value="ECO:0007005"/>
    <property type="project" value="TAIR"/>
</dbReference>
<dbReference type="GO" id="GO:0005739">
    <property type="term" value="C:mitochondrion"/>
    <property type="evidence" value="ECO:0007005"/>
    <property type="project" value="TAIR"/>
</dbReference>
<dbReference type="GO" id="GO:0005634">
    <property type="term" value="C:nucleus"/>
    <property type="evidence" value="ECO:0007005"/>
    <property type="project" value="TAIR"/>
</dbReference>
<dbReference type="GO" id="GO:0005524">
    <property type="term" value="F:ATP binding"/>
    <property type="evidence" value="ECO:0007005"/>
    <property type="project" value="TAIR"/>
</dbReference>
<dbReference type="GO" id="GO:0005507">
    <property type="term" value="F:copper ion binding"/>
    <property type="evidence" value="ECO:0007005"/>
    <property type="project" value="TAIR"/>
</dbReference>
<dbReference type="GO" id="GO:0141148">
    <property type="term" value="F:enoyl-[acyl-carrier-protein] reductase (NADPH) activity"/>
    <property type="evidence" value="ECO:0007669"/>
    <property type="project" value="UniProtKB-EC"/>
</dbReference>
<dbReference type="GO" id="GO:0016631">
    <property type="term" value="F:enoyl-[acyl-carrier-protein] reductase activity (NAD(P)H)"/>
    <property type="evidence" value="ECO:0000316"/>
    <property type="project" value="TAIR"/>
</dbReference>
<dbReference type="GO" id="GO:0006633">
    <property type="term" value="P:fatty acid biosynthetic process"/>
    <property type="evidence" value="ECO:0000316"/>
    <property type="project" value="TAIR"/>
</dbReference>
<dbReference type="CDD" id="cd08290">
    <property type="entry name" value="ETR"/>
    <property type="match status" value="1"/>
</dbReference>
<dbReference type="FunFam" id="3.40.50.720:FF:000112">
    <property type="entry name" value="Enoyl-[acyl-carrier-protein] reductase 1, mitochondrial"/>
    <property type="match status" value="1"/>
</dbReference>
<dbReference type="FunFam" id="3.90.180.10:FF:000010">
    <property type="entry name" value="Enoyl-[acyl-carrier-protein] reductase, mitochondrial"/>
    <property type="match status" value="1"/>
</dbReference>
<dbReference type="Gene3D" id="3.90.180.10">
    <property type="entry name" value="Medium-chain alcohol dehydrogenases, catalytic domain"/>
    <property type="match status" value="1"/>
</dbReference>
<dbReference type="Gene3D" id="3.40.50.720">
    <property type="entry name" value="NAD(P)-binding Rossmann-like Domain"/>
    <property type="match status" value="1"/>
</dbReference>
<dbReference type="InterPro" id="IPR013149">
    <property type="entry name" value="ADH-like_C"/>
</dbReference>
<dbReference type="InterPro" id="IPR013154">
    <property type="entry name" value="ADH-like_N"/>
</dbReference>
<dbReference type="InterPro" id="IPR011032">
    <property type="entry name" value="GroES-like_sf"/>
</dbReference>
<dbReference type="InterPro" id="IPR051034">
    <property type="entry name" value="Mito_Enoyl-ACP_Reductase"/>
</dbReference>
<dbReference type="InterPro" id="IPR036291">
    <property type="entry name" value="NAD(P)-bd_dom_sf"/>
</dbReference>
<dbReference type="InterPro" id="IPR020843">
    <property type="entry name" value="PKS_ER"/>
</dbReference>
<dbReference type="PANTHER" id="PTHR43981">
    <property type="entry name" value="ENOYL-[ACYL-CARRIER-PROTEIN] REDUCTASE, MITOCHONDRIAL"/>
    <property type="match status" value="1"/>
</dbReference>
<dbReference type="PANTHER" id="PTHR43981:SF2">
    <property type="entry name" value="ENOYL-[ACYL-CARRIER-PROTEIN] REDUCTASE, MITOCHONDRIAL"/>
    <property type="match status" value="1"/>
</dbReference>
<dbReference type="Pfam" id="PF08240">
    <property type="entry name" value="ADH_N"/>
    <property type="match status" value="1"/>
</dbReference>
<dbReference type="Pfam" id="PF00107">
    <property type="entry name" value="ADH_zinc_N"/>
    <property type="match status" value="1"/>
</dbReference>
<dbReference type="SMART" id="SM00829">
    <property type="entry name" value="PKS_ER"/>
    <property type="match status" value="1"/>
</dbReference>
<dbReference type="SUPFAM" id="SSF50129">
    <property type="entry name" value="GroES-like"/>
    <property type="match status" value="1"/>
</dbReference>
<dbReference type="SUPFAM" id="SSF51735">
    <property type="entry name" value="NAD(P)-binding Rossmann-fold domains"/>
    <property type="match status" value="1"/>
</dbReference>
<feature type="transit peptide" description="Mitochondrion" evidence="4">
    <location>
        <begin position="1"/>
        <end position="37"/>
    </location>
</feature>
<feature type="chain" id="PRO_0000000895" description="Enoyl-[acyl-carrier-protein] reductase, mitochondrial">
    <location>
        <begin position="38"/>
        <end position="375"/>
    </location>
</feature>
<feature type="active site" description="Proton donor" evidence="1">
    <location>
        <position position="96"/>
    </location>
</feature>
<feature type="binding site" evidence="1">
    <location>
        <position position="169"/>
    </location>
    <ligand>
        <name>NADP(+)</name>
        <dbReference type="ChEBI" id="CHEBI:58349"/>
    </ligand>
</feature>
<feature type="binding site" evidence="1">
    <location>
        <begin position="195"/>
        <end position="198"/>
    </location>
    <ligand>
        <name>NADP(+)</name>
        <dbReference type="ChEBI" id="CHEBI:58349"/>
    </ligand>
</feature>
<feature type="binding site" evidence="1">
    <location>
        <begin position="218"/>
        <end position="220"/>
    </location>
    <ligand>
        <name>NADP(+)</name>
        <dbReference type="ChEBI" id="CHEBI:58349"/>
    </ligand>
</feature>
<feature type="binding site" evidence="1">
    <location>
        <begin position="287"/>
        <end position="290"/>
    </location>
    <ligand>
        <name>NADP(+)</name>
        <dbReference type="ChEBI" id="CHEBI:58349"/>
    </ligand>
</feature>
<feature type="binding site" evidence="1">
    <location>
        <begin position="312"/>
        <end position="314"/>
    </location>
    <ligand>
        <name>NADP(+)</name>
        <dbReference type="ChEBI" id="CHEBI:58349"/>
    </ligand>
</feature>
<feature type="binding site" evidence="1">
    <location>
        <position position="370"/>
    </location>
    <ligand>
        <name>NADP(+)</name>
        <dbReference type="ChEBI" id="CHEBI:58349"/>
    </ligand>
</feature>
<feature type="sequence conflict" description="In Ref. 3; AAL32632/AAM47974." evidence="5" ref="3">
    <original>K</original>
    <variation>E</variation>
    <location>
        <position position="293"/>
    </location>
</feature>
<sequence length="375" mass="40823">MAALMESVVGRALKFSSTANFRSIRRGETPTLCIKSFSTIMSPPSKAIVYEEHGSPDSVTRLVNLPPVEVKENDVCVKMIAAPINPSDINRIEGVYPVRPPVPAVGGYEGVGEVYAVGSNVNGFSPGDWVIPSPPSSGTWQTYVVKEESVWHKIDKECPMEYAATITVNPLTALRMLEDFVNLNSGDSVVQNGATSIVGQCVIQLARLRGISTINLIRDRAGSDEAREQLKALGADEVFSESQLNVKNVKSLLGNLPEPALGFNCVGGNAASLVLKYLREGGTMVTYGGMSKKPITVSTTSFIFKDLALRGFWLQSWLSMGKVKECREMIDYLLGLARDGKLKYETELVPFEEFPVALDKALGKLGRQPKQVITF</sequence>
<name>MECR_ARATH</name>
<gene>
    <name type="ordered locus">At3g45770</name>
    <name type="ORF">T6D9.100</name>
</gene>
<protein>
    <recommendedName>
        <fullName>Enoyl-[acyl-carrier-protein] reductase, mitochondrial</fullName>
        <ecNumber>1.3.1.104</ecNumber>
    </recommendedName>
    <alternativeName>
        <fullName>2-enoyl thioester reductase</fullName>
    </alternativeName>
</protein>
<organism>
    <name type="scientific">Arabidopsis thaliana</name>
    <name type="common">Mouse-ear cress</name>
    <dbReference type="NCBI Taxonomy" id="3702"/>
    <lineage>
        <taxon>Eukaryota</taxon>
        <taxon>Viridiplantae</taxon>
        <taxon>Streptophyta</taxon>
        <taxon>Embryophyta</taxon>
        <taxon>Tracheophyta</taxon>
        <taxon>Spermatophyta</taxon>
        <taxon>Magnoliopsida</taxon>
        <taxon>eudicotyledons</taxon>
        <taxon>Gunneridae</taxon>
        <taxon>Pentapetalae</taxon>
        <taxon>rosids</taxon>
        <taxon>malvids</taxon>
        <taxon>Brassicales</taxon>
        <taxon>Brassicaceae</taxon>
        <taxon>Camelineae</taxon>
        <taxon>Arabidopsis</taxon>
    </lineage>
</organism>
<keyword id="KW-0025">Alternative splicing</keyword>
<keyword id="KW-0275">Fatty acid biosynthesis</keyword>
<keyword id="KW-0276">Fatty acid metabolism</keyword>
<keyword id="KW-0444">Lipid biosynthesis</keyword>
<keyword id="KW-0443">Lipid metabolism</keyword>
<keyword id="KW-0496">Mitochondrion</keyword>
<keyword id="KW-0521">NADP</keyword>
<keyword id="KW-0560">Oxidoreductase</keyword>
<keyword id="KW-1185">Reference proteome</keyword>
<keyword id="KW-0809">Transit peptide</keyword>